<proteinExistence type="inferred from homology"/>
<gene>
    <name type="primary">YRA2</name>
    <name type="ORF">AWRI1631_110110</name>
</gene>
<organism>
    <name type="scientific">Saccharomyces cerevisiae (strain AWRI1631)</name>
    <name type="common">Baker's yeast</name>
    <dbReference type="NCBI Taxonomy" id="545124"/>
    <lineage>
        <taxon>Eukaryota</taxon>
        <taxon>Fungi</taxon>
        <taxon>Dikarya</taxon>
        <taxon>Ascomycota</taxon>
        <taxon>Saccharomycotina</taxon>
        <taxon>Saccharomycetes</taxon>
        <taxon>Saccharomycetales</taxon>
        <taxon>Saccharomycetaceae</taxon>
        <taxon>Saccharomyces</taxon>
    </lineage>
</organism>
<comment type="function">
    <text evidence="1">Involved in export of poly(A) mRNAs from the nucleus. Recruited to the coding sequences as well as poly-A sites of active genes (By similarity).</text>
</comment>
<comment type="subunit">
    <text evidence="1">Associates with mRNPs. Interacts with YRA1.</text>
</comment>
<comment type="subcellular location">
    <subcellularLocation>
        <location evidence="1">Nucleus</location>
    </subcellularLocation>
</comment>
<comment type="similarity">
    <text evidence="5">Belongs to the YRA1 family.</text>
</comment>
<feature type="chain" id="PRO_0000409544" description="RNA annealing protein YRA2">
    <location>
        <begin position="1"/>
        <end position="203"/>
    </location>
</feature>
<feature type="domain" description="RRM" evidence="3">
    <location>
        <begin position="64"/>
        <end position="138"/>
    </location>
</feature>
<feature type="region of interest" description="Disordered" evidence="4">
    <location>
        <begin position="1"/>
        <end position="60"/>
    </location>
</feature>
<feature type="region of interest" description="Disordered" evidence="4">
    <location>
        <begin position="134"/>
        <end position="203"/>
    </location>
</feature>
<feature type="compositionally biased region" description="Polar residues" evidence="4">
    <location>
        <begin position="11"/>
        <end position="20"/>
    </location>
</feature>
<feature type="compositionally biased region" description="Basic and acidic residues" evidence="4">
    <location>
        <begin position="47"/>
        <end position="60"/>
    </location>
</feature>
<feature type="compositionally biased region" description="Basic residues" evidence="4">
    <location>
        <begin position="139"/>
        <end position="153"/>
    </location>
</feature>
<feature type="compositionally biased region" description="Basic residues" evidence="4">
    <location>
        <begin position="163"/>
        <end position="180"/>
    </location>
</feature>
<feature type="modified residue" description="N-acetylmethionine" evidence="2">
    <location>
        <position position="1"/>
    </location>
</feature>
<name>YRA2_YEAS6</name>
<reference key="1">
    <citation type="journal article" date="2008" name="FEMS Yeast Res.">
        <title>Comparative genome analysis of a Saccharomyces cerevisiae wine strain.</title>
        <authorList>
            <person name="Borneman A.R."/>
            <person name="Forgan A.H."/>
            <person name="Pretorius I.S."/>
            <person name="Chambers P.J."/>
        </authorList>
    </citation>
    <scope>NUCLEOTIDE SEQUENCE [LARGE SCALE GENOMIC DNA]</scope>
    <source>
        <strain>AWRI1631</strain>
    </source>
</reference>
<sequence>MDKAFDEIIGNSHTDSSSNHKVTRYRRRDLRNELGPRLGFAPSDAASRSKDRLYREREEPPLPKRIRISKIPLDVSDYTLDDMIKEFGSPIFSKIFDNKEDRTCIYEFEDPEVLEKIVERYNGHELHNAKIEVEIYQPQRKHSRMNAHNRRKQTAQEQGRGRPGSHYRQRPNRVSKKNKGREKNNTPTSVEALDAELDAYMKG</sequence>
<evidence type="ECO:0000250" key="1"/>
<evidence type="ECO:0000250" key="2">
    <source>
        <dbReference type="UniProtKB" id="P36036"/>
    </source>
</evidence>
<evidence type="ECO:0000255" key="3">
    <source>
        <dbReference type="PROSITE-ProRule" id="PRU00176"/>
    </source>
</evidence>
<evidence type="ECO:0000256" key="4">
    <source>
        <dbReference type="SAM" id="MobiDB-lite"/>
    </source>
</evidence>
<evidence type="ECO:0000305" key="5"/>
<accession>B5VLV2</accession>
<protein>
    <recommendedName>
        <fullName>RNA annealing protein YRA2</fullName>
    </recommendedName>
</protein>
<keyword id="KW-0007">Acetylation</keyword>
<keyword id="KW-0238">DNA-binding</keyword>
<keyword id="KW-0509">mRNA transport</keyword>
<keyword id="KW-0539">Nucleus</keyword>
<keyword id="KW-0694">RNA-binding</keyword>
<keyword id="KW-0813">Transport</keyword>
<dbReference type="EMBL" id="ABSV01001410">
    <property type="protein sequence ID" value="EDZ71092.1"/>
    <property type="molecule type" value="Genomic_DNA"/>
</dbReference>
<dbReference type="SMR" id="B5VLV2"/>
<dbReference type="Proteomes" id="UP000008988">
    <property type="component" value="Unassembled WGS sequence"/>
</dbReference>
<dbReference type="GO" id="GO:0005634">
    <property type="term" value="C:nucleus"/>
    <property type="evidence" value="ECO:0007669"/>
    <property type="project" value="UniProtKB-SubCell"/>
</dbReference>
<dbReference type="GO" id="GO:0003677">
    <property type="term" value="F:DNA binding"/>
    <property type="evidence" value="ECO:0007669"/>
    <property type="project" value="UniProtKB-KW"/>
</dbReference>
<dbReference type="GO" id="GO:0003723">
    <property type="term" value="F:RNA binding"/>
    <property type="evidence" value="ECO:0007669"/>
    <property type="project" value="UniProtKB-KW"/>
</dbReference>
<dbReference type="GO" id="GO:0051028">
    <property type="term" value="P:mRNA transport"/>
    <property type="evidence" value="ECO:0007669"/>
    <property type="project" value="UniProtKB-KW"/>
</dbReference>
<dbReference type="CDD" id="cd12295">
    <property type="entry name" value="RRM_YRA2"/>
    <property type="match status" value="1"/>
</dbReference>
<dbReference type="FunFam" id="3.30.70.330:FF:000793">
    <property type="entry name" value="RNA annealing protein YRA2"/>
    <property type="match status" value="1"/>
</dbReference>
<dbReference type="Gene3D" id="3.30.70.330">
    <property type="match status" value="1"/>
</dbReference>
<dbReference type="InterPro" id="IPR025715">
    <property type="entry name" value="FoP_C"/>
</dbReference>
<dbReference type="InterPro" id="IPR012677">
    <property type="entry name" value="Nucleotide-bd_a/b_plait_sf"/>
</dbReference>
<dbReference type="InterPro" id="IPR035979">
    <property type="entry name" value="RBD_domain_sf"/>
</dbReference>
<dbReference type="InterPro" id="IPR000504">
    <property type="entry name" value="RRM_dom"/>
</dbReference>
<dbReference type="InterPro" id="IPR034396">
    <property type="entry name" value="Yra2_RRM"/>
</dbReference>
<dbReference type="Pfam" id="PF13865">
    <property type="entry name" value="FoP_duplication"/>
    <property type="match status" value="1"/>
</dbReference>
<dbReference type="Pfam" id="PF00076">
    <property type="entry name" value="RRM_1"/>
    <property type="match status" value="1"/>
</dbReference>
<dbReference type="SMART" id="SM00360">
    <property type="entry name" value="RRM"/>
    <property type="match status" value="1"/>
</dbReference>
<dbReference type="SUPFAM" id="SSF54928">
    <property type="entry name" value="RNA-binding domain, RBD"/>
    <property type="match status" value="1"/>
</dbReference>
<dbReference type="PROSITE" id="PS50102">
    <property type="entry name" value="RRM"/>
    <property type="match status" value="1"/>
</dbReference>